<reference key="1">
    <citation type="journal article" date="2006" name="PLoS Genet.">
        <title>Who ate whom? Adaptive Helicobacter genomic changes that accompanied a host jump from early humans to large felines.</title>
        <authorList>
            <person name="Eppinger M."/>
            <person name="Baar C."/>
            <person name="Linz B."/>
            <person name="Raddatz G."/>
            <person name="Lanz C."/>
            <person name="Keller H."/>
            <person name="Morelli G."/>
            <person name="Gressmann H."/>
            <person name="Achtman M."/>
            <person name="Schuster S.C."/>
        </authorList>
    </citation>
    <scope>NUCLEOTIDE SEQUENCE [LARGE SCALE GENOMIC DNA]</scope>
    <source>
        <strain>Sheeba</strain>
    </source>
</reference>
<sequence>MKVIKTAPLIPSEIKVLEKEGNRIKISLAPFEFGYAVTLAHPIRRLLLLSSVGYAPVGLKIEGVHHEFDSLRGVTEDVSLFIMNLKNIRFIAKALVGQDSPLENQSVVVDYSFKGPMELRARDLNSEHIEIINPEMLLATINEDAQLNFSLIIYKGMGYVPSEITRELMPEGYMPLDGSFTPIKNVVYEIENVLVEGDPNYEKIIFDIETDGQIDPYKAFLSAVKVMSKQLGVFGEKPIANTEYSGDYAQRDDAKDLSAKIESMNLSARCFNCLDKIGIKYVGELVLMSEEELKGVKNMGKKSYDEIAEKLNDLGYPVGTELSLEQRESLKKRLEKLEDKGGND</sequence>
<comment type="function">
    <text evidence="1">DNA-dependent RNA polymerase catalyzes the transcription of DNA into RNA using the four ribonucleoside triphosphates as substrates.</text>
</comment>
<comment type="catalytic activity">
    <reaction evidence="1">
        <text>RNA(n) + a ribonucleoside 5'-triphosphate = RNA(n+1) + diphosphate</text>
        <dbReference type="Rhea" id="RHEA:21248"/>
        <dbReference type="Rhea" id="RHEA-COMP:14527"/>
        <dbReference type="Rhea" id="RHEA-COMP:17342"/>
        <dbReference type="ChEBI" id="CHEBI:33019"/>
        <dbReference type="ChEBI" id="CHEBI:61557"/>
        <dbReference type="ChEBI" id="CHEBI:140395"/>
        <dbReference type="EC" id="2.7.7.6"/>
    </reaction>
</comment>
<comment type="subunit">
    <text evidence="1">Homodimer. The RNAP catalytic core consists of 2 alpha, 1 beta, 1 beta' and 1 omega subunit. When a sigma factor is associated with the core the holoenzyme is formed, which can initiate transcription.</text>
</comment>
<comment type="domain">
    <text evidence="1">The N-terminal domain is essential for RNAP assembly and basal transcription, whereas the C-terminal domain is involved in interaction with transcriptional regulators and with upstream promoter elements.</text>
</comment>
<comment type="similarity">
    <text evidence="1">Belongs to the RNA polymerase alpha chain family.</text>
</comment>
<keyword id="KW-0240">DNA-directed RNA polymerase</keyword>
<keyword id="KW-0548">Nucleotidyltransferase</keyword>
<keyword id="KW-0804">Transcription</keyword>
<keyword id="KW-0808">Transferase</keyword>
<accession>Q17ZB4</accession>
<dbReference type="EC" id="2.7.7.6" evidence="1"/>
<dbReference type="EMBL" id="AM260522">
    <property type="protein sequence ID" value="CAJ99012.1"/>
    <property type="molecule type" value="Genomic_DNA"/>
</dbReference>
<dbReference type="RefSeq" id="WP_011577128.1">
    <property type="nucleotide sequence ID" value="NC_008229.1"/>
</dbReference>
<dbReference type="BMRB" id="Q17ZB4"/>
<dbReference type="SMR" id="Q17ZB4"/>
<dbReference type="STRING" id="382638.Hac_0160"/>
<dbReference type="GeneID" id="31757691"/>
<dbReference type="KEGG" id="hac:Hac_0160"/>
<dbReference type="eggNOG" id="COG0202">
    <property type="taxonomic scope" value="Bacteria"/>
</dbReference>
<dbReference type="HOGENOM" id="CLU_053084_0_1_7"/>
<dbReference type="OrthoDB" id="9805706at2"/>
<dbReference type="BioCyc" id="HACI382638:HAC_RS00710-MONOMER"/>
<dbReference type="Proteomes" id="UP000000775">
    <property type="component" value="Chromosome"/>
</dbReference>
<dbReference type="GO" id="GO:0005737">
    <property type="term" value="C:cytoplasm"/>
    <property type="evidence" value="ECO:0007669"/>
    <property type="project" value="UniProtKB-ARBA"/>
</dbReference>
<dbReference type="GO" id="GO:0000428">
    <property type="term" value="C:DNA-directed RNA polymerase complex"/>
    <property type="evidence" value="ECO:0007669"/>
    <property type="project" value="UniProtKB-KW"/>
</dbReference>
<dbReference type="GO" id="GO:0003677">
    <property type="term" value="F:DNA binding"/>
    <property type="evidence" value="ECO:0007669"/>
    <property type="project" value="UniProtKB-UniRule"/>
</dbReference>
<dbReference type="GO" id="GO:0003899">
    <property type="term" value="F:DNA-directed RNA polymerase activity"/>
    <property type="evidence" value="ECO:0007669"/>
    <property type="project" value="UniProtKB-UniRule"/>
</dbReference>
<dbReference type="GO" id="GO:0046983">
    <property type="term" value="F:protein dimerization activity"/>
    <property type="evidence" value="ECO:0007669"/>
    <property type="project" value="InterPro"/>
</dbReference>
<dbReference type="GO" id="GO:0006351">
    <property type="term" value="P:DNA-templated transcription"/>
    <property type="evidence" value="ECO:0007669"/>
    <property type="project" value="UniProtKB-UniRule"/>
</dbReference>
<dbReference type="CDD" id="cd06928">
    <property type="entry name" value="RNAP_alpha_NTD"/>
    <property type="match status" value="1"/>
</dbReference>
<dbReference type="Gene3D" id="1.10.150.20">
    <property type="entry name" value="5' to 3' exonuclease, C-terminal subdomain"/>
    <property type="match status" value="1"/>
</dbReference>
<dbReference type="Gene3D" id="2.170.120.12">
    <property type="entry name" value="DNA-directed RNA polymerase, insert domain"/>
    <property type="match status" value="1"/>
</dbReference>
<dbReference type="Gene3D" id="3.30.1360.10">
    <property type="entry name" value="RNA polymerase, RBP11-like subunit"/>
    <property type="match status" value="1"/>
</dbReference>
<dbReference type="HAMAP" id="MF_00059">
    <property type="entry name" value="RNApol_bact_RpoA"/>
    <property type="match status" value="1"/>
</dbReference>
<dbReference type="InterPro" id="IPR011262">
    <property type="entry name" value="DNA-dir_RNA_pol_insert"/>
</dbReference>
<dbReference type="InterPro" id="IPR011263">
    <property type="entry name" value="DNA-dir_RNA_pol_RpoA/D/Rpb3"/>
</dbReference>
<dbReference type="InterPro" id="IPR011773">
    <property type="entry name" value="DNA-dir_RpoA"/>
</dbReference>
<dbReference type="InterPro" id="IPR036603">
    <property type="entry name" value="RBP11-like"/>
</dbReference>
<dbReference type="InterPro" id="IPR011260">
    <property type="entry name" value="RNAP_asu_C"/>
</dbReference>
<dbReference type="InterPro" id="IPR036643">
    <property type="entry name" value="RNApol_insert_sf"/>
</dbReference>
<dbReference type="NCBIfam" id="NF003517">
    <property type="entry name" value="PRK05182.2-3"/>
    <property type="match status" value="1"/>
</dbReference>
<dbReference type="NCBIfam" id="TIGR02027">
    <property type="entry name" value="rpoA"/>
    <property type="match status" value="1"/>
</dbReference>
<dbReference type="Pfam" id="PF01000">
    <property type="entry name" value="RNA_pol_A_bac"/>
    <property type="match status" value="1"/>
</dbReference>
<dbReference type="Pfam" id="PF03118">
    <property type="entry name" value="RNA_pol_A_CTD"/>
    <property type="match status" value="1"/>
</dbReference>
<dbReference type="Pfam" id="PF01193">
    <property type="entry name" value="RNA_pol_L"/>
    <property type="match status" value="1"/>
</dbReference>
<dbReference type="SMART" id="SM00662">
    <property type="entry name" value="RPOLD"/>
    <property type="match status" value="1"/>
</dbReference>
<dbReference type="SUPFAM" id="SSF47789">
    <property type="entry name" value="C-terminal domain of RNA polymerase alpha subunit"/>
    <property type="match status" value="1"/>
</dbReference>
<dbReference type="SUPFAM" id="SSF56553">
    <property type="entry name" value="Insert subdomain of RNA polymerase alpha subunit"/>
    <property type="match status" value="1"/>
</dbReference>
<dbReference type="SUPFAM" id="SSF55257">
    <property type="entry name" value="RBP11-like subunits of RNA polymerase"/>
    <property type="match status" value="1"/>
</dbReference>
<proteinExistence type="inferred from homology"/>
<gene>
    <name evidence="1" type="primary">rpoA</name>
    <name type="ordered locus">Hac_0160</name>
</gene>
<feature type="chain" id="PRO_0000296818" description="DNA-directed RNA polymerase subunit alpha">
    <location>
        <begin position="1"/>
        <end position="344"/>
    </location>
</feature>
<feature type="region of interest" description="Alpha N-terminal domain (alpha-NTD)" evidence="1">
    <location>
        <begin position="1"/>
        <end position="238"/>
    </location>
</feature>
<feature type="region of interest" description="Alpha C-terminal domain (alpha-CTD)" evidence="1">
    <location>
        <begin position="253"/>
        <end position="344"/>
    </location>
</feature>
<protein>
    <recommendedName>
        <fullName evidence="1">DNA-directed RNA polymerase subunit alpha</fullName>
        <shortName evidence="1">RNAP subunit alpha</shortName>
        <ecNumber evidence="1">2.7.7.6</ecNumber>
    </recommendedName>
    <alternativeName>
        <fullName evidence="1">RNA polymerase subunit alpha</fullName>
    </alternativeName>
    <alternativeName>
        <fullName evidence="1">Transcriptase subunit alpha</fullName>
    </alternativeName>
</protein>
<name>RPOA_HELAH</name>
<organism>
    <name type="scientific">Helicobacter acinonychis (strain Sheeba)</name>
    <dbReference type="NCBI Taxonomy" id="382638"/>
    <lineage>
        <taxon>Bacteria</taxon>
        <taxon>Pseudomonadati</taxon>
        <taxon>Campylobacterota</taxon>
        <taxon>Epsilonproteobacteria</taxon>
        <taxon>Campylobacterales</taxon>
        <taxon>Helicobacteraceae</taxon>
        <taxon>Helicobacter</taxon>
    </lineage>
</organism>
<evidence type="ECO:0000255" key="1">
    <source>
        <dbReference type="HAMAP-Rule" id="MF_00059"/>
    </source>
</evidence>